<organism>
    <name type="scientific">Homo sapiens</name>
    <name type="common">Human</name>
    <dbReference type="NCBI Taxonomy" id="9606"/>
    <lineage>
        <taxon>Eukaryota</taxon>
        <taxon>Metazoa</taxon>
        <taxon>Chordata</taxon>
        <taxon>Craniata</taxon>
        <taxon>Vertebrata</taxon>
        <taxon>Euteleostomi</taxon>
        <taxon>Mammalia</taxon>
        <taxon>Eutheria</taxon>
        <taxon>Euarchontoglires</taxon>
        <taxon>Primates</taxon>
        <taxon>Haplorrhini</taxon>
        <taxon>Catarrhini</taxon>
        <taxon>Hominidae</taxon>
        <taxon>Homo</taxon>
    </lineage>
</organism>
<evidence type="ECO:0000250" key="1">
    <source>
        <dbReference type="UniProtKB" id="Q8C170"/>
    </source>
</evidence>
<evidence type="ECO:0000250" key="2">
    <source>
        <dbReference type="UniProtKB" id="Q9Z1N3"/>
    </source>
</evidence>
<evidence type="ECO:0000255" key="3"/>
<evidence type="ECO:0000255" key="4">
    <source>
        <dbReference type="PROSITE-ProRule" id="PRU00116"/>
    </source>
</evidence>
<evidence type="ECO:0000255" key="5">
    <source>
        <dbReference type="PROSITE-ProRule" id="PRU00166"/>
    </source>
</evidence>
<evidence type="ECO:0000255" key="6">
    <source>
        <dbReference type="PROSITE-ProRule" id="PRU00172"/>
    </source>
</evidence>
<evidence type="ECO:0000255" key="7">
    <source>
        <dbReference type="PROSITE-ProRule" id="PRU00226"/>
    </source>
</evidence>
<evidence type="ECO:0000255" key="8">
    <source>
        <dbReference type="PROSITE-ProRule" id="PRU00782"/>
    </source>
</evidence>
<evidence type="ECO:0000256" key="9">
    <source>
        <dbReference type="SAM" id="MobiDB-lite"/>
    </source>
</evidence>
<evidence type="ECO:0000269" key="10">
    <source>
    </source>
</evidence>
<evidence type="ECO:0000269" key="11">
    <source>
    </source>
</evidence>
<evidence type="ECO:0000269" key="12">
    <source>
    </source>
</evidence>
<evidence type="ECO:0000269" key="13">
    <source>
    </source>
</evidence>
<evidence type="ECO:0000269" key="14">
    <source>
    </source>
</evidence>
<evidence type="ECO:0000269" key="15">
    <source>
    </source>
</evidence>
<evidence type="ECO:0000269" key="16">
    <source ref="3"/>
</evidence>
<evidence type="ECO:0000269" key="17">
    <source ref="6"/>
</evidence>
<evidence type="ECO:0000303" key="18">
    <source>
    </source>
</evidence>
<evidence type="ECO:0000303" key="19">
    <source>
    </source>
</evidence>
<evidence type="ECO:0000303" key="20">
    <source>
    </source>
</evidence>
<evidence type="ECO:0000303" key="21">
    <source>
    </source>
</evidence>
<evidence type="ECO:0000305" key="22"/>
<evidence type="ECO:0007744" key="23">
    <source>
    </source>
</evidence>
<name>MYO9A_HUMAN</name>
<sequence>MNINDGGRRRFEDNEHTLRIYPGAISEGTIYCPIPARKNSTAAEVIESLINKLHLDKTKCYVLAEVKEFGGEEWILNPTDCPVQRMMLWPRMALENRLSGEDYRFLLREKNLDGSIHYGSLQSWLRVTEERRRMMERGFLPQPQQKDFDDLCSLPDLNEKTLLENLRNRFKHEKIYTYVGSILIVINPFKFLPIYNPKYVKMYDNHQLGKLEPHIYAVADVAYHAMLQRKKNQCIVISGESGSGKTQSTNFLIHHLTALSQKGFASGVEQIILGAGPVLEAFGNAKTAHNNNSSRFGKFIQVNYQETGTVLGAYVEKYLLEKSRLVYQEHNERNYHVFYYLLAGASEDERSAFHLKQPEEYHYLNQITKKPLRQSWDDYCYDSEPDCFTVEGEDLRHDFERLQLAMEMVGFLPKTRRQIFSLLSAILHLGNICYKKKTYRDDSIDICNPEVLPIVSELLEVKEEMLFEALVTRKTVTVGEKLILPYKLAEAVTVRNSMAKSLYSALFDWIVFRINHALLNSKDLEHNTKTLSIGVLDIFGFEDYENNSFEQFCINFANERLQHYFNQHIFKLEQEEYRTEGISWHNIDYIDNTCCINLISKKPTGLLHLLDEESNFPQATNQTLLDKFKHQHEDNSYIEFPAVMEPAFIIKHYAGKVKYGVKDFREKNTDHMRPDIVALLRSSKNAFISGMIGIDPVAVFRWAILRAFFRAMVAFREAGKRNIHRKTGHDDTAPCAILKSMDSFSFLQHPVHQRSLEILQRCKEEKYSITRKNPRTPLSDLQGMNALNEKNQHDTFDIAWNGRTGIRQSRLSSGTSLLDKDGIFANSTSSKLLERAHGILTRNKNFKSKPALPKHLLEVNSLKHLTRLTLQDRITKSLLHLHKKKKPPSISAQFQASLSKLMETLGQAEPYFVKCIRSNAEKLPLRFSDVLVLRQLRYTGMLETVRIRQSGYSSKYSFQDFVSHFHVLLPRNIIPSKFNIQDFFRKINLNPDNYQVGKTMVFLKEQERQHLQDLLHQEVLRRIILLQRWFRVLLCRQHFLHLRQASVIIQRFWRNYLNQKQVRDAAVQKDAFVMASAAALLQASWRAHLERQRYLELRAAAIVIQQKWRDYYRRRHMAAICIQARWKAYRESKRYQEQRKKIILLQSTCRGFRARQRFKALKEQRLRETKPEVGLVNIKGYGSLEIQGSDPSGWEDCSFDNRIKAIEECKSVIESNRISRESSVDCLKESPNKQQERAQSQSGVDLQEDVLVRERPRSLEDLHQKKVGRAKRESRRMRELEQAIFSLELLKVRSLGGISPSEDRRWSTELVPEGLQSPRGTPDSESSQGSLELLSYEESQKSKLESVISDEGDLQFPSPKISSSPKFDSRDNALSASNETSSAEHLKDGTMKEMVVCSSESITCKPQLKDSFISNSLPTFFYIPQQDPLKTNSQLDTSIQRNKLLENEDTAGEALTLDINRETRRYHCSGKDQIVPSLNTESSNPVLKKLEKLNTEKEERQKQLQQQNEKEMMEQIRQQTDILEKERKAFKTIEKPRIGECLVAPSSYQSKQRVERPSSLLSLNTSNKGELNVLGSLSLKDAALAQKDSSSAHLPPKDRPVTVFFERKGSPCQSSTVKELSKTDRMGTQLNVACKLSNNRISKREHFRPTQSYSHNSDDLSREGNARPIFFTPKDNMSIPLVSKEALNSKNPQLHKEDEPAWKPVKLAGPGQRETSQRFSSVDEQAKLHKTMSQGEITKLAVRQKASDSDIRPQRAKMRFWAKGKQGEKKTTRVKPTTQSEVSPLFAGTDVIPAHQFPDELAAYHPTPPLSPELPGSCRKEFKENKEPSPKAKRKRSVKISNVALDSMHWQNDSVQIIASVSDLKSMDEFLLKKVNDLDNEDSKKDTLVDVVFKKALKEFRQNIFSFYSSALAMDDGKSIRYKDLYALFEQILEKTMRLEQRDSLGESPVRVWVNTFKVFLDEYMNEFKTSDCTATKVPKTERKKRRKKETDLVEEHNGHIFKATQYSIPTYCEYCSSLIWIMDRASVCKLCKYACHKKCCLKTTAKCSKKYDPELSSRQFGVELSRLTSEDRTVPLVVEKLINYIEMHGLYTEGIYRKSGSTNKIKELRQGLDTDAESVNLDDYNIHVIASVFKQWLRDLPNPLMTFELYEEFLRAMGLQERKETIRGVYSVIDQLSRTHLNTLERLIFHLVRIALQEDTNRMSANALAIVFAPCILRCPDTTDPLQSVQDISKTTTCVELIVVEQMNKYKARLKDISSLEFAENKAKTRLSLIRRSMGKGRIRRGNYPGPSSPVVVRLPSVSDVSEETLTSEAAMETDITEQQQAAMQQEERVLTEQIENLQKEKEELTFEMLVLEPRASDDETLESEASIGTADSSENLNMESEYAISEKSERSLALSSLKTAGKSEPSSKLRKQLKKQQDSLDVVDSSVSSLCLSNTASSHGTRKLFQIYSKSPFYRAASGNEALGMEGPLGQTKFLEDKPQFISRGTFNPEKGKQKLKNVKNSPQKTKETPEGTVMSGRRKTVDPDCTSNQQLALFGNNEFMV</sequence>
<dbReference type="EMBL" id="AF117888">
    <property type="protein sequence ID" value="AAD49195.1"/>
    <property type="molecule type" value="mRNA"/>
</dbReference>
<dbReference type="EMBL" id="AC020779">
    <property type="status" value="NOT_ANNOTATED_CDS"/>
    <property type="molecule type" value="Genomic_DNA"/>
</dbReference>
<dbReference type="EMBL" id="AC022872">
    <property type="status" value="NOT_ANNOTATED_CDS"/>
    <property type="molecule type" value="Genomic_DNA"/>
</dbReference>
<dbReference type="EMBL" id="AC090454">
    <property type="status" value="NOT_ANNOTATED_CDS"/>
    <property type="molecule type" value="Genomic_DNA"/>
</dbReference>
<dbReference type="EMBL" id="AC104938">
    <property type="status" value="NOT_ANNOTATED_CDS"/>
    <property type="molecule type" value="Genomic_DNA"/>
</dbReference>
<dbReference type="EMBL" id="CH471082">
    <property type="protein sequence ID" value="EAW77880.1"/>
    <property type="molecule type" value="Genomic_DNA"/>
</dbReference>
<dbReference type="EMBL" id="BC060886">
    <property type="protein sequence ID" value="AAH60886.1"/>
    <property type="molecule type" value="mRNA"/>
</dbReference>
<dbReference type="EMBL" id="BC140869">
    <property type="protein sequence ID" value="AAI40870.1"/>
    <property type="molecule type" value="mRNA"/>
</dbReference>
<dbReference type="EMBL" id="AJ001714">
    <property type="protein sequence ID" value="CAA04947.1"/>
    <property type="molecule type" value="mRNA"/>
</dbReference>
<dbReference type="EMBL" id="AB290183">
    <property type="protein sequence ID" value="BAG06737.1"/>
    <property type="molecule type" value="mRNA"/>
</dbReference>
<dbReference type="EMBL" id="L29148">
    <property type="protein sequence ID" value="AAA20911.1"/>
    <property type="molecule type" value="mRNA"/>
</dbReference>
<dbReference type="EMBL" id="DQ088983">
    <property type="protein sequence ID" value="AAZ85978.1"/>
    <property type="molecule type" value="mRNA"/>
</dbReference>
<dbReference type="EMBL" id="DQ088984">
    <property type="protein sequence ID" value="AAZ85979.1"/>
    <property type="molecule type" value="mRNA"/>
</dbReference>
<dbReference type="EMBL" id="AL137287">
    <property type="protein sequence ID" value="CAB70679.1"/>
    <property type="molecule type" value="mRNA"/>
</dbReference>
<dbReference type="EMBL" id="AK001923">
    <property type="protein sequence ID" value="BAA91979.1"/>
    <property type="status" value="ALT_INIT"/>
    <property type="molecule type" value="mRNA"/>
</dbReference>
<dbReference type="EMBL" id="AK023306">
    <property type="protein sequence ID" value="BAB14517.1"/>
    <property type="status" value="ALT_INIT"/>
    <property type="molecule type" value="mRNA"/>
</dbReference>
<dbReference type="CCDS" id="CCDS10239.1">
    <molecule id="B2RTY4-1"/>
</dbReference>
<dbReference type="PIR" id="E59435">
    <property type="entry name" value="E59435"/>
</dbReference>
<dbReference type="PIR" id="I61699">
    <property type="entry name" value="I61699"/>
</dbReference>
<dbReference type="PIR" id="T46354">
    <property type="entry name" value="T46354"/>
</dbReference>
<dbReference type="RefSeq" id="NP_008832.2">
    <molecule id="B2RTY4-1"/>
    <property type="nucleotide sequence ID" value="NM_006901.4"/>
</dbReference>
<dbReference type="RefSeq" id="XP_006720602.1">
    <molecule id="B2RTY4-4"/>
    <property type="nucleotide sequence ID" value="XM_006720539.4"/>
</dbReference>
<dbReference type="RefSeq" id="XP_047288505.1">
    <molecule id="B2RTY4-4"/>
    <property type="nucleotide sequence ID" value="XM_047432549.1"/>
</dbReference>
<dbReference type="RefSeq" id="XP_047288506.1">
    <molecule id="B2RTY4-4"/>
    <property type="nucleotide sequence ID" value="XM_047432550.1"/>
</dbReference>
<dbReference type="RefSeq" id="XP_047288534.1">
    <molecule id="B2RTY4-1"/>
    <property type="nucleotide sequence ID" value="XM_047432578.1"/>
</dbReference>
<dbReference type="RefSeq" id="XP_047288537.1">
    <molecule id="B2RTY4-2"/>
    <property type="nucleotide sequence ID" value="XM_047432581.1"/>
</dbReference>
<dbReference type="SMR" id="B2RTY4"/>
<dbReference type="BioGRID" id="110733">
    <property type="interactions" value="107"/>
</dbReference>
<dbReference type="FunCoup" id="B2RTY4">
    <property type="interactions" value="1548"/>
</dbReference>
<dbReference type="IntAct" id="B2RTY4">
    <property type="interactions" value="69"/>
</dbReference>
<dbReference type="MINT" id="B2RTY4"/>
<dbReference type="STRING" id="9606.ENSP00000348349"/>
<dbReference type="GlyGen" id="B2RTY4">
    <property type="glycosylation" value="4 sites, 1 O-linked glycan (3 sites)"/>
</dbReference>
<dbReference type="iPTMnet" id="B2RTY4"/>
<dbReference type="PhosphoSitePlus" id="B2RTY4"/>
<dbReference type="BioMuta" id="MYO9A"/>
<dbReference type="jPOST" id="B2RTY4"/>
<dbReference type="MassIVE" id="B2RTY4"/>
<dbReference type="PaxDb" id="9606-ENSP00000348349"/>
<dbReference type="PeptideAtlas" id="B2RTY4"/>
<dbReference type="ProteomicsDB" id="3450">
    <molecule id="B2RTY4-1"/>
</dbReference>
<dbReference type="ProteomicsDB" id="3451">
    <molecule id="B2RTY4-2"/>
</dbReference>
<dbReference type="ProteomicsDB" id="3452">
    <molecule id="B2RTY4-3"/>
</dbReference>
<dbReference type="ProteomicsDB" id="3453">
    <molecule id="B2RTY4-4"/>
</dbReference>
<dbReference type="ProteomicsDB" id="3454">
    <molecule id="B2RTY4-5"/>
</dbReference>
<dbReference type="Pumba" id="B2RTY4"/>
<dbReference type="Antibodypedia" id="26536">
    <property type="antibodies" value="28 antibodies from 13 providers"/>
</dbReference>
<dbReference type="DNASU" id="4649"/>
<dbReference type="Ensembl" id="ENST00000356056.10">
    <molecule id="B2RTY4-1"/>
    <property type="protein sequence ID" value="ENSP00000348349.5"/>
    <property type="gene ID" value="ENSG00000066933.17"/>
</dbReference>
<dbReference type="GeneID" id="4649"/>
<dbReference type="KEGG" id="hsa:4649"/>
<dbReference type="MANE-Select" id="ENST00000356056.10">
    <property type="protein sequence ID" value="ENSP00000348349.5"/>
    <property type="RefSeq nucleotide sequence ID" value="NM_006901.4"/>
    <property type="RefSeq protein sequence ID" value="NP_008832.2"/>
</dbReference>
<dbReference type="UCSC" id="uc002atl.6">
    <molecule id="B2RTY4-1"/>
    <property type="organism name" value="human"/>
</dbReference>
<dbReference type="AGR" id="HGNC:7608"/>
<dbReference type="CTD" id="4649"/>
<dbReference type="DisGeNET" id="4649"/>
<dbReference type="GeneCards" id="MYO9A"/>
<dbReference type="GeneReviews" id="MYO9A"/>
<dbReference type="HGNC" id="HGNC:7608">
    <property type="gene designation" value="MYO9A"/>
</dbReference>
<dbReference type="HPA" id="ENSG00000066933">
    <property type="expression patterns" value="Tissue enhanced (retina)"/>
</dbReference>
<dbReference type="MalaCards" id="MYO9A"/>
<dbReference type="MIM" id="604875">
    <property type="type" value="gene"/>
</dbReference>
<dbReference type="MIM" id="618198">
    <property type="type" value="phenotype"/>
</dbReference>
<dbReference type="neXtProt" id="NX_B2RTY4"/>
<dbReference type="OpenTargets" id="ENSG00000066933"/>
<dbReference type="Orphanet" id="98914">
    <property type="disease" value="Presynaptic congenital myasthenic syndromes"/>
</dbReference>
<dbReference type="PharmGKB" id="PA31413"/>
<dbReference type="VEuPathDB" id="HostDB:ENSG00000066933"/>
<dbReference type="eggNOG" id="KOG1453">
    <property type="taxonomic scope" value="Eukaryota"/>
</dbReference>
<dbReference type="eggNOG" id="KOG4229">
    <property type="taxonomic scope" value="Eukaryota"/>
</dbReference>
<dbReference type="GeneTree" id="ENSGT00940000154905"/>
<dbReference type="HOGENOM" id="CLU_000192_7_5_1"/>
<dbReference type="InParanoid" id="B2RTY4"/>
<dbReference type="OMA" id="INDYRSM"/>
<dbReference type="OrthoDB" id="9479353at2759"/>
<dbReference type="PAN-GO" id="B2RTY4">
    <property type="GO annotations" value="5 GO annotations based on evolutionary models"/>
</dbReference>
<dbReference type="PhylomeDB" id="B2RTY4"/>
<dbReference type="TreeFam" id="TF316834"/>
<dbReference type="PathwayCommons" id="B2RTY4"/>
<dbReference type="Reactome" id="R-HSA-8980692">
    <property type="pathway name" value="RHOA GTPase cycle"/>
</dbReference>
<dbReference type="Reactome" id="R-HSA-9013026">
    <property type="pathway name" value="RHOB GTPase cycle"/>
</dbReference>
<dbReference type="Reactome" id="R-HSA-9013424">
    <property type="pathway name" value="RHOV GTPase cycle"/>
</dbReference>
<dbReference type="SignaLink" id="B2RTY4"/>
<dbReference type="SIGNOR" id="B2RTY4"/>
<dbReference type="BioGRID-ORCS" id="4649">
    <property type="hits" value="16 hits in 1152 CRISPR screens"/>
</dbReference>
<dbReference type="ChiTaRS" id="MYO9A">
    <property type="organism name" value="human"/>
</dbReference>
<dbReference type="GenomeRNAi" id="4649"/>
<dbReference type="Pharos" id="B2RTY4">
    <property type="development level" value="Tbio"/>
</dbReference>
<dbReference type="PRO" id="PR:B2RTY4"/>
<dbReference type="Proteomes" id="UP000005640">
    <property type="component" value="Chromosome 15"/>
</dbReference>
<dbReference type="RNAct" id="B2RTY4">
    <property type="molecule type" value="protein"/>
</dbReference>
<dbReference type="Bgee" id="ENSG00000066933">
    <property type="expression patterns" value="Expressed in calcaneal tendon and 211 other cell types or tissues"/>
</dbReference>
<dbReference type="ExpressionAtlas" id="B2RTY4">
    <property type="expression patterns" value="baseline and differential"/>
</dbReference>
<dbReference type="GO" id="GO:0005884">
    <property type="term" value="C:actin filament"/>
    <property type="evidence" value="ECO:0000318"/>
    <property type="project" value="GO_Central"/>
</dbReference>
<dbReference type="GO" id="GO:0044295">
    <property type="term" value="C:axonal growth cone"/>
    <property type="evidence" value="ECO:0000250"/>
    <property type="project" value="UniProtKB"/>
</dbReference>
<dbReference type="GO" id="GO:0005829">
    <property type="term" value="C:cytosol"/>
    <property type="evidence" value="ECO:0000304"/>
    <property type="project" value="Reactome"/>
</dbReference>
<dbReference type="GO" id="GO:0016020">
    <property type="term" value="C:membrane"/>
    <property type="evidence" value="ECO:0007669"/>
    <property type="project" value="UniProtKB-SubCell"/>
</dbReference>
<dbReference type="GO" id="GO:0045202">
    <property type="term" value="C:synapse"/>
    <property type="evidence" value="ECO:0007669"/>
    <property type="project" value="UniProtKB-SubCell"/>
</dbReference>
<dbReference type="GO" id="GO:0016461">
    <property type="term" value="C:unconventional myosin complex"/>
    <property type="evidence" value="ECO:0000303"/>
    <property type="project" value="UniProtKB"/>
</dbReference>
<dbReference type="GO" id="GO:0051015">
    <property type="term" value="F:actin filament binding"/>
    <property type="evidence" value="ECO:0000318"/>
    <property type="project" value="GO_Central"/>
</dbReference>
<dbReference type="GO" id="GO:0005524">
    <property type="term" value="F:ATP binding"/>
    <property type="evidence" value="ECO:0007669"/>
    <property type="project" value="UniProtKB-KW"/>
</dbReference>
<dbReference type="GO" id="GO:0005096">
    <property type="term" value="F:GTPase activator activity"/>
    <property type="evidence" value="ECO:0000304"/>
    <property type="project" value="Reactome"/>
</dbReference>
<dbReference type="GO" id="GO:0000146">
    <property type="term" value="F:microfilament motor activity"/>
    <property type="evidence" value="ECO:0000318"/>
    <property type="project" value="GO_Central"/>
</dbReference>
<dbReference type="GO" id="GO:0008270">
    <property type="term" value="F:zinc ion binding"/>
    <property type="evidence" value="ECO:0007669"/>
    <property type="project" value="UniProtKB-KW"/>
</dbReference>
<dbReference type="GO" id="GO:0034329">
    <property type="term" value="P:cell junction assembly"/>
    <property type="evidence" value="ECO:0000315"/>
    <property type="project" value="UniProtKB"/>
</dbReference>
<dbReference type="GO" id="GO:0045198">
    <property type="term" value="P:establishment of epithelial cell apical/basal polarity"/>
    <property type="evidence" value="ECO:0000315"/>
    <property type="project" value="UniProtKB"/>
</dbReference>
<dbReference type="GO" id="GO:0035556">
    <property type="term" value="P:intracellular signal transduction"/>
    <property type="evidence" value="ECO:0007669"/>
    <property type="project" value="InterPro"/>
</dbReference>
<dbReference type="GO" id="GO:0150011">
    <property type="term" value="P:regulation of neuron projection arborization"/>
    <property type="evidence" value="ECO:0000250"/>
    <property type="project" value="UniProtKB"/>
</dbReference>
<dbReference type="GO" id="GO:0051056">
    <property type="term" value="P:regulation of small GTPase mediated signal transduction"/>
    <property type="evidence" value="ECO:0000304"/>
    <property type="project" value="Reactome"/>
</dbReference>
<dbReference type="GO" id="GO:0007601">
    <property type="term" value="P:visual perception"/>
    <property type="evidence" value="ECO:0000304"/>
    <property type="project" value="ProtInc"/>
</dbReference>
<dbReference type="CDD" id="cd20883">
    <property type="entry name" value="C1_Myosin-IXa"/>
    <property type="match status" value="1"/>
</dbReference>
<dbReference type="CDD" id="cd23767">
    <property type="entry name" value="IQCD"/>
    <property type="match status" value="1"/>
</dbReference>
<dbReference type="CDD" id="cd01385">
    <property type="entry name" value="MYSc_Myo9"/>
    <property type="match status" value="1"/>
</dbReference>
<dbReference type="CDD" id="cd17216">
    <property type="entry name" value="RA_Myosin-IXa"/>
    <property type="match status" value="1"/>
</dbReference>
<dbReference type="CDD" id="cd04377">
    <property type="entry name" value="RhoGAP_myosin_IX"/>
    <property type="match status" value="1"/>
</dbReference>
<dbReference type="FunFam" id="1.20.5.190:FF:000027">
    <property type="entry name" value="Myosin IXA"/>
    <property type="match status" value="1"/>
</dbReference>
<dbReference type="FunFam" id="1.20.5.190:FF:000018">
    <property type="entry name" value="Myosin XI D"/>
    <property type="match status" value="1"/>
</dbReference>
<dbReference type="FunFam" id="1.20.120.720:FF:000003">
    <property type="entry name" value="Putative unconventional myosin-IXa"/>
    <property type="match status" value="1"/>
</dbReference>
<dbReference type="FunFam" id="3.30.60.20:FF:000020">
    <property type="entry name" value="Putative unconventional myosin-IXa"/>
    <property type="match status" value="1"/>
</dbReference>
<dbReference type="FunFam" id="3.40.850.10:FF:000008">
    <property type="entry name" value="Putative unconventional myosin-IXa"/>
    <property type="match status" value="1"/>
</dbReference>
<dbReference type="FunFam" id="1.10.10.820:FF:000003">
    <property type="entry name" value="unconventional myosin-IXa isoform X1"/>
    <property type="match status" value="1"/>
</dbReference>
<dbReference type="FunFam" id="1.10.555.10:FF:000009">
    <property type="entry name" value="unconventional myosin-IXa isoform X1"/>
    <property type="match status" value="1"/>
</dbReference>
<dbReference type="FunFam" id="1.20.58.530:FF:000005">
    <property type="entry name" value="unconventional myosin-IXa isoform X1"/>
    <property type="match status" value="1"/>
</dbReference>
<dbReference type="FunFam" id="3.10.20.90:FF:000121">
    <property type="entry name" value="unconventional myosin-IXa isoform X1"/>
    <property type="match status" value="1"/>
</dbReference>
<dbReference type="FunFam" id="3.40.850.10:FF:000013">
    <property type="entry name" value="unconventional myosin-IXa isoform X1"/>
    <property type="match status" value="1"/>
</dbReference>
<dbReference type="FunFam" id="1.20.5.190:FF:000013">
    <property type="entry name" value="unconventional myosin-IXa isoform X2"/>
    <property type="match status" value="1"/>
</dbReference>
<dbReference type="FunFam" id="1.20.58.530:FF:000009">
    <property type="entry name" value="unconventional myosin-IXb isoform X1"/>
    <property type="match status" value="1"/>
</dbReference>
<dbReference type="Gene3D" id="1.10.10.820">
    <property type="match status" value="1"/>
</dbReference>
<dbReference type="Gene3D" id="1.20.5.190">
    <property type="match status" value="3"/>
</dbReference>
<dbReference type="Gene3D" id="1.20.58.530">
    <property type="match status" value="1"/>
</dbReference>
<dbReference type="Gene3D" id="3.30.60.20">
    <property type="match status" value="1"/>
</dbReference>
<dbReference type="Gene3D" id="6.20.240.20">
    <property type="match status" value="1"/>
</dbReference>
<dbReference type="Gene3D" id="3.40.850.10">
    <property type="entry name" value="Kinesin motor domain"/>
    <property type="match status" value="2"/>
</dbReference>
<dbReference type="Gene3D" id="1.20.120.720">
    <property type="entry name" value="Myosin VI head, motor domain, U50 subdomain"/>
    <property type="match status" value="1"/>
</dbReference>
<dbReference type="Gene3D" id="3.10.20.90">
    <property type="entry name" value="Phosphatidylinositol 3-kinase Catalytic Subunit, Chain A, domain 1"/>
    <property type="match status" value="1"/>
</dbReference>
<dbReference type="Gene3D" id="1.10.555.10">
    <property type="entry name" value="Rho GTPase activation protein"/>
    <property type="match status" value="1"/>
</dbReference>
<dbReference type="InterPro" id="IPR046349">
    <property type="entry name" value="C1-like_sf"/>
</dbReference>
<dbReference type="InterPro" id="IPR000048">
    <property type="entry name" value="IQ_motif_EF-hand-BS"/>
</dbReference>
<dbReference type="InterPro" id="IPR036961">
    <property type="entry name" value="Kinesin_motor_dom_sf"/>
</dbReference>
<dbReference type="InterPro" id="IPR046987">
    <property type="entry name" value="Myo9"/>
</dbReference>
<dbReference type="InterPro" id="IPR001609">
    <property type="entry name" value="Myosin_head_motor_dom-like"/>
</dbReference>
<dbReference type="InterPro" id="IPR036023">
    <property type="entry name" value="MYSc_Myo9"/>
</dbReference>
<dbReference type="InterPro" id="IPR027417">
    <property type="entry name" value="P-loop_NTPase"/>
</dbReference>
<dbReference type="InterPro" id="IPR002219">
    <property type="entry name" value="PE/DAG-bd"/>
</dbReference>
<dbReference type="InterPro" id="IPR000159">
    <property type="entry name" value="RA_dom"/>
</dbReference>
<dbReference type="InterPro" id="IPR028558">
    <property type="entry name" value="RA_Myosin-IXa"/>
</dbReference>
<dbReference type="InterPro" id="IPR008936">
    <property type="entry name" value="Rho_GTPase_activation_prot"/>
</dbReference>
<dbReference type="InterPro" id="IPR000198">
    <property type="entry name" value="RhoGAP_dom"/>
</dbReference>
<dbReference type="InterPro" id="IPR046990">
    <property type="entry name" value="RhoGAP_myosin_IX"/>
</dbReference>
<dbReference type="InterPro" id="IPR029071">
    <property type="entry name" value="Ubiquitin-like_domsf"/>
</dbReference>
<dbReference type="PANTHER" id="PTHR46184:SF3">
    <property type="entry name" value="UNCONVENTIONAL MYOSIN-IXA"/>
    <property type="match status" value="1"/>
</dbReference>
<dbReference type="PANTHER" id="PTHR46184">
    <property type="entry name" value="UNCONVENTIONAL MYOSIN-IXB-LIKE PROTEIN"/>
    <property type="match status" value="1"/>
</dbReference>
<dbReference type="Pfam" id="PF00130">
    <property type="entry name" value="C1_1"/>
    <property type="match status" value="1"/>
</dbReference>
<dbReference type="Pfam" id="PF00612">
    <property type="entry name" value="IQ"/>
    <property type="match status" value="4"/>
</dbReference>
<dbReference type="Pfam" id="PF00063">
    <property type="entry name" value="Myosin_head"/>
    <property type="match status" value="2"/>
</dbReference>
<dbReference type="Pfam" id="PF00788">
    <property type="entry name" value="RA"/>
    <property type="match status" value="1"/>
</dbReference>
<dbReference type="Pfam" id="PF00620">
    <property type="entry name" value="RhoGAP"/>
    <property type="match status" value="1"/>
</dbReference>
<dbReference type="PRINTS" id="PR00193">
    <property type="entry name" value="MYOSINHEAVY"/>
</dbReference>
<dbReference type="SMART" id="SM00109">
    <property type="entry name" value="C1"/>
    <property type="match status" value="1"/>
</dbReference>
<dbReference type="SMART" id="SM00015">
    <property type="entry name" value="IQ"/>
    <property type="match status" value="5"/>
</dbReference>
<dbReference type="SMART" id="SM00242">
    <property type="entry name" value="MYSc"/>
    <property type="match status" value="1"/>
</dbReference>
<dbReference type="SMART" id="SM00314">
    <property type="entry name" value="RA"/>
    <property type="match status" value="1"/>
</dbReference>
<dbReference type="SMART" id="SM00324">
    <property type="entry name" value="RhoGAP"/>
    <property type="match status" value="1"/>
</dbReference>
<dbReference type="SUPFAM" id="SSF57889">
    <property type="entry name" value="Cysteine-rich domain"/>
    <property type="match status" value="1"/>
</dbReference>
<dbReference type="SUPFAM" id="SSF48350">
    <property type="entry name" value="GTPase activation domain, GAP"/>
    <property type="match status" value="1"/>
</dbReference>
<dbReference type="SUPFAM" id="SSF52540">
    <property type="entry name" value="P-loop containing nucleoside triphosphate hydrolases"/>
    <property type="match status" value="2"/>
</dbReference>
<dbReference type="SUPFAM" id="SSF54236">
    <property type="entry name" value="Ubiquitin-like"/>
    <property type="match status" value="1"/>
</dbReference>
<dbReference type="PROSITE" id="PS50096">
    <property type="entry name" value="IQ"/>
    <property type="match status" value="4"/>
</dbReference>
<dbReference type="PROSITE" id="PS51456">
    <property type="entry name" value="MYOSIN_MOTOR"/>
    <property type="match status" value="1"/>
</dbReference>
<dbReference type="PROSITE" id="PS50200">
    <property type="entry name" value="RA"/>
    <property type="match status" value="1"/>
</dbReference>
<dbReference type="PROSITE" id="PS50238">
    <property type="entry name" value="RHOGAP"/>
    <property type="match status" value="1"/>
</dbReference>
<dbReference type="PROSITE" id="PS00479">
    <property type="entry name" value="ZF_DAG_PE_1"/>
    <property type="match status" value="1"/>
</dbReference>
<dbReference type="PROSITE" id="PS50081">
    <property type="entry name" value="ZF_DAG_PE_2"/>
    <property type="match status" value="1"/>
</dbReference>
<feature type="chain" id="PRO_0000348440" description="Unconventional myosin-IXa">
    <location>
        <begin position="1"/>
        <end position="2548"/>
    </location>
</feature>
<feature type="transmembrane region" description="Helical" evidence="3">
    <location>
        <begin position="175"/>
        <end position="195"/>
    </location>
</feature>
<feature type="domain" description="Ras-associating" evidence="5">
    <location>
        <begin position="14"/>
        <end position="112"/>
    </location>
</feature>
<feature type="domain" description="Myosin motor" evidence="8">
    <location>
        <begin position="146"/>
        <end position="1016"/>
    </location>
</feature>
<feature type="domain" description="IQ 1" evidence="4">
    <location>
        <begin position="1021"/>
        <end position="1041"/>
    </location>
</feature>
<feature type="domain" description="IQ 2" evidence="4">
    <location>
        <begin position="1042"/>
        <end position="1071"/>
    </location>
</feature>
<feature type="domain" description="IQ 3" evidence="4">
    <location>
        <begin position="1074"/>
        <end position="1103"/>
    </location>
</feature>
<feature type="domain" description="IQ 4" evidence="4">
    <location>
        <begin position="1115"/>
        <end position="1144"/>
    </location>
</feature>
<feature type="domain" description="IQ 5" evidence="4">
    <location>
        <begin position="1138"/>
        <end position="1167"/>
    </location>
</feature>
<feature type="domain" description="Rho-GAP" evidence="6">
    <location>
        <begin position="2063"/>
        <end position="2251"/>
    </location>
</feature>
<feature type="zinc finger region" description="Phorbol-ester/DAG-type 1" evidence="7">
    <location>
        <begin position="1999"/>
        <end position="2048"/>
    </location>
</feature>
<feature type="zinc finger region" description="Phorbol-ester/DAG-type 2" evidence="7">
    <location>
        <begin position="2068"/>
        <end position="2119"/>
    </location>
</feature>
<feature type="region of interest" description="Actin-binding" evidence="8">
    <location>
        <begin position="898"/>
        <end position="920"/>
    </location>
</feature>
<feature type="region of interest" description="Neck or regulatory domain">
    <location>
        <begin position="1021"/>
        <end position="1162"/>
    </location>
</feature>
<feature type="region of interest" description="Tail">
    <location>
        <begin position="1163"/>
        <end position="2511"/>
    </location>
</feature>
<feature type="region of interest" description="Disordered" evidence="9">
    <location>
        <begin position="1223"/>
        <end position="1250"/>
    </location>
</feature>
<feature type="region of interest" description="Disordered" evidence="9">
    <location>
        <begin position="1299"/>
        <end position="1386"/>
    </location>
</feature>
<feature type="region of interest" description="Disordered" evidence="9">
    <location>
        <begin position="1804"/>
        <end position="1836"/>
    </location>
</feature>
<feature type="region of interest" description="Disordered" evidence="9">
    <location>
        <begin position="2359"/>
        <end position="2383"/>
    </location>
</feature>
<feature type="region of interest" description="Disordered" evidence="9">
    <location>
        <begin position="2401"/>
        <end position="2424"/>
    </location>
</feature>
<feature type="region of interest" description="Disordered" evidence="9">
    <location>
        <begin position="2490"/>
        <end position="2531"/>
    </location>
</feature>
<feature type="coiled-coil region" evidence="3">
    <location>
        <begin position="1264"/>
        <end position="1291"/>
    </location>
</feature>
<feature type="coiled-coil region" evidence="3">
    <location>
        <begin position="1486"/>
        <end position="1532"/>
    </location>
</feature>
<feature type="coiled-coil region" evidence="3">
    <location>
        <begin position="2315"/>
        <end position="2358"/>
    </location>
</feature>
<feature type="compositionally biased region" description="Basic and acidic residues" evidence="9">
    <location>
        <begin position="1223"/>
        <end position="1236"/>
    </location>
</feature>
<feature type="compositionally biased region" description="Low complexity" evidence="9">
    <location>
        <begin position="1324"/>
        <end position="1337"/>
    </location>
</feature>
<feature type="compositionally biased region" description="Low complexity" evidence="9">
    <location>
        <begin position="1356"/>
        <end position="1366"/>
    </location>
</feature>
<feature type="compositionally biased region" description="Polar residues" evidence="9">
    <location>
        <begin position="1372"/>
        <end position="1381"/>
    </location>
</feature>
<feature type="compositionally biased region" description="Basic and acidic residues" evidence="9">
    <location>
        <begin position="1818"/>
        <end position="1830"/>
    </location>
</feature>
<feature type="binding site" evidence="3">
    <location>
        <begin position="239"/>
        <end position="246"/>
    </location>
    <ligand>
        <name>ATP</name>
        <dbReference type="ChEBI" id="CHEBI:30616"/>
    </ligand>
</feature>
<feature type="site" description="Arginine finger; crucial for GTP hydrolysis by stabilizing the transition state" evidence="6">
    <location>
        <position position="2098"/>
    </location>
</feature>
<feature type="modified residue" description="Phosphoserine" evidence="2">
    <location>
        <position position="755"/>
    </location>
</feature>
<feature type="modified residue" description="Phosphoserine" evidence="1">
    <location>
        <position position="1242"/>
    </location>
</feature>
<feature type="modified residue" description="Phosphoserine" evidence="2">
    <location>
        <position position="1258"/>
    </location>
</feature>
<feature type="modified residue" description="Phosphoserine" evidence="23">
    <location>
        <position position="1299"/>
    </location>
</feature>
<feature type="modified residue" description="Phosphoserine" evidence="23">
    <location>
        <position position="1317"/>
    </location>
</feature>
<feature type="modified residue" description="Phosphoserine" evidence="23">
    <location>
        <position position="1364"/>
    </location>
</feature>
<feature type="modified residue" description="Phosphoserine" evidence="1">
    <location>
        <position position="1948"/>
    </location>
</feature>
<feature type="modified residue" description="Phosphoserine" evidence="23">
    <location>
        <position position="2294"/>
    </location>
</feature>
<feature type="modified residue" description="Phosphoserine" evidence="23">
    <location>
        <position position="2464"/>
    </location>
</feature>
<feature type="splice variant" id="VSP_035156" description="In isoform 5." evidence="18">
    <location>
        <begin position="45"/>
        <end position="280"/>
    </location>
</feature>
<feature type="splice variant" id="VSP_035157" description="In isoform 2." evidence="22">
    <location>
        <begin position="367"/>
        <end position="385"/>
    </location>
</feature>
<feature type="splice variant" id="VSP_035158" description="In isoform 3." evidence="20">
    <original>H</original>
    <variation>K</variation>
    <location>
        <position position="729"/>
    </location>
</feature>
<feature type="splice variant" id="VSP_035159" description="In isoform 3." evidence="20">
    <location>
        <begin position="730"/>
        <end position="2548"/>
    </location>
</feature>
<feature type="splice variant" id="VSP_035160" description="In isoform 4." evidence="19 21">
    <original>E</original>
    <variation>EVARPAHKKKARMARTRSDFLTRGTFADGEGDTEEDDYDDIIEPLLSLDQASHCELGPAPSLGQASHSDSEM</variation>
    <location>
        <position position="1714"/>
    </location>
</feature>
<feature type="sequence variant" id="VAR_046165" description="In dbSNP:rs17855105." evidence="11">
    <original>R</original>
    <variation>K</variation>
    <location>
        <position position="37"/>
    </location>
</feature>
<feature type="sequence variant" id="VAR_046166" description="In dbSNP:rs2149692744." evidence="10">
    <original>R</original>
    <variation>Q</variation>
    <location>
        <position position="85"/>
    </location>
</feature>
<feature type="sequence variant" id="VAR_046167" description="In dbSNP:rs2929516.">
    <original>T</original>
    <variation>I</variation>
    <location>
        <position position="161"/>
    </location>
</feature>
<feature type="sequence variant" id="VAR_046168" evidence="10">
    <original>N</original>
    <variation>D</variation>
    <location>
        <position position="168"/>
    </location>
</feature>
<feature type="sequence variant" id="VAR_081671" description="In CMS24; uncertain significance; dbSNP:rs374155761." evidence="12">
    <original>Y</original>
    <variation>C</variation>
    <location>
        <position position="203"/>
    </location>
</feature>
<feature type="sequence variant" id="VAR_046169" evidence="10">
    <original>L</original>
    <variation>P</variation>
    <location>
        <position position="211"/>
    </location>
</feature>
<feature type="sequence variant" id="VAR_082148" description="In CMS24; uncertain significance." evidence="15">
    <location>
        <begin position="513"/>
        <end position="2548"/>
    </location>
</feature>
<feature type="sequence variant" id="VAR_056189" description="In dbSNP:rs11637562.">
    <original>A</original>
    <variation>V</variation>
    <location>
        <position position="825"/>
    </location>
</feature>
<feature type="sequence variant" id="VAR_046170" description="In dbSNP:rs754348944." evidence="10">
    <original>R</original>
    <variation>Q</variation>
    <location>
        <position position="946"/>
    </location>
</feature>
<feature type="sequence variant" id="VAR_046171" description="In dbSNP:rs2415129." evidence="10 11 16 17">
    <original>G</original>
    <variation>E</variation>
    <location>
        <position position="1193"/>
    </location>
</feature>
<feature type="sequence variant" id="VAR_046172" description="In dbSNP:rs55738821." evidence="10">
    <original>S</original>
    <variation>P</variation>
    <location>
        <position position="1362"/>
    </location>
</feature>
<feature type="sequence variant" id="VAR_046173" description="In dbSNP:rs16956375.">
    <original>P</original>
    <variation>R</variation>
    <location>
        <position position="1476"/>
    </location>
</feature>
<feature type="sequence variant" id="VAR_081672" description="In CMS24; uncertain significance; dbSNP:rs149046541." evidence="14">
    <original>R</original>
    <variation>H</variation>
    <location>
        <position position="1517"/>
    </location>
</feature>
<feature type="sequence variant" id="VAR_081673" description="In CMS24; uncertain significance; dbSNP:rs150726107." evidence="14">
    <original>D</original>
    <variation>G</variation>
    <location>
        <position position="1698"/>
    </location>
</feature>
<feature type="sequence variant" id="VAR_046174" description="In dbSNP:rs16956367.">
    <original>H</original>
    <variation>Y</variation>
    <location>
        <position position="1795"/>
    </location>
</feature>
<feature type="sequence variant" id="VAR_046175" description="In dbSNP:rs2306575.">
    <original>H</original>
    <variation>Q</variation>
    <location>
        <position position="1805"/>
    </location>
</feature>
<feature type="sequence variant" id="VAR_046176" description="In dbSNP:rs74475742." evidence="10">
    <original>R</original>
    <variation>C</variation>
    <location>
        <position position="1834"/>
    </location>
</feature>
<feature type="sequence variant" id="VAR_081674" description="In CMS24; uncertain significance; dbSNP:rs1567176190." evidence="12">
    <original>G</original>
    <variation>E</variation>
    <location>
        <position position="2282"/>
    </location>
</feature>
<feature type="sequence variant" id="VAR_081675" description="In CMS24; uncertain significance; dbSNP:rs142345927." evidence="14">
    <original>R</original>
    <variation>H</variation>
    <location>
        <position position="2283"/>
    </location>
</feature>
<feature type="sequence variant" id="VAR_046177" description="In dbSNP:rs2291280.">
    <original>I</original>
    <variation>V</variation>
    <location>
        <position position="2390"/>
    </location>
</feature>
<feature type="sequence conflict" description="In Ref. 5; CAA04947." evidence="22" ref="5">
    <original>L</original>
    <variation>R</variation>
    <location>
        <position position="88"/>
    </location>
</feature>
<feature type="sequence conflict" description="In Ref. 5; CAA04947." evidence="22" ref="5">
    <original>L</original>
    <variation>Q</variation>
    <location>
        <position position="94"/>
    </location>
</feature>
<feature type="sequence conflict" description="In Ref. 5; CAA04947." evidence="22" ref="5">
    <original>R</original>
    <variation>H</variation>
    <location>
        <position position="104"/>
    </location>
</feature>
<feature type="sequence conflict" description="In Ref. 5; CAA04947." evidence="22" ref="5">
    <original>H</original>
    <variation>R</variation>
    <location>
        <position position="206"/>
    </location>
</feature>
<feature type="sequence conflict" description="In Ref. 5; CAA04947." evidence="22" ref="5">
    <original>D</original>
    <variation>N</variation>
    <location>
        <position position="394"/>
    </location>
</feature>
<feature type="sequence conflict" description="In Ref. 5; CAA04947." evidence="22" ref="5">
    <original>S</original>
    <variation>P</variation>
    <location>
        <position position="424"/>
    </location>
</feature>
<feature type="sequence conflict" description="In Ref. 5; CAA04947." evidence="22" ref="5">
    <original>S</original>
    <variation>C</variation>
    <location>
        <position position="504"/>
    </location>
</feature>
<feature type="sequence conflict" description="In Ref. 5; CAA04947." evidence="22" ref="5">
    <original>E</original>
    <variation>D</variation>
    <location>
        <position position="573"/>
    </location>
</feature>
<feature type="sequence conflict" description="In Ref. 5; CAA04947." evidence="22" ref="5">
    <original>C</original>
    <variation>Y</variation>
    <location>
        <position position="595"/>
    </location>
</feature>
<feature type="sequence conflict" description="In Ref. 5; CAA04947." evidence="22" ref="5">
    <original>I</original>
    <variation>M</variation>
    <location>
        <position position="694"/>
    </location>
</feature>
<feature type="sequence conflict" description="In Ref. 5; CAA04947." evidence="22" ref="5">
    <original>L</original>
    <variation>I</variation>
    <location>
        <position position="705"/>
    </location>
</feature>
<feature type="sequence conflict" description="In Ref. 10; BAB14517." evidence="22" ref="10">
    <original>S</original>
    <variation>P</variation>
    <location>
        <position position="1591"/>
    </location>
</feature>
<protein>
    <recommendedName>
        <fullName>Unconventional myosin-IXa</fullName>
    </recommendedName>
    <alternativeName>
        <fullName>Unconventional myosin-9a</fullName>
    </alternativeName>
</protein>
<comment type="function">
    <text evidence="1 2">Myosins are actin-based motor molecules with ATPase activity. Unconventional myosins serve in intracellular movements. Regulates Rho by stimulating it's GTPase activity in neurons. Required for the regulation of neurite branching and motor neuron axon guidance (By similarity).</text>
</comment>
<comment type="subcellular location">
    <subcellularLocation>
        <location evidence="3">Membrane</location>
        <topology evidence="3">Single-pass membrane protein</topology>
    </subcellularLocation>
    <subcellularLocation>
        <location evidence="2">Cytoplasm</location>
    </subcellularLocation>
    <subcellularLocation>
        <location evidence="1">Synapse</location>
    </subcellularLocation>
    <subcellularLocation>
        <location evidence="1">Cell projection</location>
        <location evidence="1">Growth cone</location>
    </subcellularLocation>
    <text evidence="1 2">Localized in the cytoplasm of cell bodies, dendrites and axons with occasional hints of an enrichment near the plasma membrane. Localized at the neuromuscular junction (By similarity).</text>
</comment>
<comment type="alternative products">
    <event type="alternative splicing"/>
    <isoform>
        <id>B2RTY4-1</id>
        <name>1</name>
        <sequence type="displayed"/>
    </isoform>
    <isoform>
        <id>B2RTY4-2</id>
        <name>2</name>
        <sequence type="described" ref="VSP_035157"/>
    </isoform>
    <isoform>
        <id>B2RTY4-3</id>
        <name>3</name>
        <sequence type="described" ref="VSP_035158 VSP_035159"/>
    </isoform>
    <isoform>
        <id>B2RTY4-4</id>
        <name>4</name>
        <sequence type="described" ref="VSP_035160"/>
    </isoform>
    <isoform>
        <id>B2RTY4-5</id>
        <name>5</name>
        <sequence type="described" ref="VSP_035156"/>
    </isoform>
</comment>
<comment type="tissue specificity">
    <text evidence="10">Found to be expressed in testis and placenta and at lower levels in all the examined tissues with the exception of liver (PubMed:10409426). Isoform 5: Found in leukocytes but not in brain, retina or testis (PubMed:10409426).</text>
</comment>
<comment type="PTM">
    <text evidence="13">Phosphorylated by ALPK1 following monosodium urate monohydrate (MSU)-induced inflammation.</text>
</comment>
<comment type="disease" evidence="12 14 15">
    <disease id="DI-05394">
        <name>Myasthenic syndrome, congenital, 24, presynaptic</name>
        <acronym>CMS24</acronym>
        <description>A form of congenital myasthenic syndrome, a group of disorders characterized by failure of neuromuscular transmission, including pre-synaptic, synaptic, and post-synaptic disorders that are not of autoimmune origin. Clinical features include easy fatigability and muscle weakness. CMS24 inheritance is autosomal recessive.</description>
        <dbReference type="MIM" id="618198"/>
    </disease>
    <text>The disease may be caused by variants affecting the gene represented in this entry.</text>
</comment>
<comment type="miscellaneous">
    <molecule>Isoform 5</molecule>
    <text evidence="22">Lacks the ATP-binding domain which suggests that it cannot interact with actin.</text>
</comment>
<comment type="similarity">
    <text evidence="22">Belongs to the TRAFAC class myosin-kinesin ATPase superfamily. Myosin family.</text>
</comment>
<comment type="caution">
    <text evidence="22">Represents an unconventional myosin. This protein should not be confused with the conventional myosin-9 (MYH9).</text>
</comment>
<comment type="sequence caution" evidence="22">
    <conflict type="erroneous initiation">
        <sequence resource="EMBL-CDS" id="BAA91979"/>
    </conflict>
    <text>Truncated N-terminus.</text>
</comment>
<comment type="sequence caution" evidence="22">
    <conflict type="erroneous initiation">
        <sequence resource="EMBL-CDS" id="BAB14517"/>
    </conflict>
    <text>Truncated N-terminus.</text>
</comment>
<keyword id="KW-0009">Actin-binding</keyword>
<keyword id="KW-0025">Alternative splicing</keyword>
<keyword id="KW-0067">ATP-binding</keyword>
<keyword id="KW-0966">Cell projection</keyword>
<keyword id="KW-0175">Coiled coil</keyword>
<keyword id="KW-1004">Congenital myasthenic syndrome</keyword>
<keyword id="KW-0963">Cytoplasm</keyword>
<keyword id="KW-0225">Disease variant</keyword>
<keyword id="KW-0343">GTPase activation</keyword>
<keyword id="KW-0472">Membrane</keyword>
<keyword id="KW-0479">Metal-binding</keyword>
<keyword id="KW-0505">Motor protein</keyword>
<keyword id="KW-0518">Myosin</keyword>
<keyword id="KW-0547">Nucleotide-binding</keyword>
<keyword id="KW-0597">Phosphoprotein</keyword>
<keyword id="KW-1267">Proteomics identification</keyword>
<keyword id="KW-1185">Reference proteome</keyword>
<keyword id="KW-0677">Repeat</keyword>
<keyword id="KW-0770">Synapse</keyword>
<keyword id="KW-0812">Transmembrane</keyword>
<keyword id="KW-1133">Transmembrane helix</keyword>
<keyword id="KW-0862">Zinc</keyword>
<keyword id="KW-0863">Zinc-finger</keyword>
<reference key="1">
    <citation type="journal article" date="1999" name="Genomics">
        <title>The cloning and developmental expression of unconventional myosin IXA (MYO9A) a gene in the Bardet-Biedl syndrome (BBS4) region at chromosome 15q22-q23.</title>
        <authorList>
            <person name="Gorman S.W."/>
            <person name="Haider N.B."/>
            <person name="Grieshammer U."/>
            <person name="Swiderski R.E."/>
            <person name="Kim E."/>
            <person name="Welch J.W."/>
            <person name="Searby C."/>
            <person name="Leng S."/>
            <person name="Carmi R."/>
            <person name="Sheffield V.C."/>
            <person name="Duhl D.M."/>
        </authorList>
    </citation>
    <scope>NUCLEOTIDE SEQUENCE [MRNA] (ISOFORMS 1 AND 5)</scope>
    <scope>TISSUE SPECIFICITY</scope>
    <scope>VARIANTS GLN-85; ASP-168; PRO-211; GLN-946; GLU-1193; PRO-1362 AND CYS-1834</scope>
</reference>
<reference key="2">
    <citation type="journal article" date="2006" name="Nature">
        <title>Analysis of the DNA sequence and duplication history of human chromosome 15.</title>
        <authorList>
            <person name="Zody M.C."/>
            <person name="Garber M."/>
            <person name="Sharpe T."/>
            <person name="Young S.K."/>
            <person name="Rowen L."/>
            <person name="O'Neill K."/>
            <person name="Whittaker C.A."/>
            <person name="Kamal M."/>
            <person name="Chang J.L."/>
            <person name="Cuomo C.A."/>
            <person name="Dewar K."/>
            <person name="FitzGerald M.G."/>
            <person name="Kodira C.D."/>
            <person name="Madan A."/>
            <person name="Qin S."/>
            <person name="Yang X."/>
            <person name="Abbasi N."/>
            <person name="Abouelleil A."/>
            <person name="Arachchi H.M."/>
            <person name="Baradarani L."/>
            <person name="Birditt B."/>
            <person name="Bloom S."/>
            <person name="Bloom T."/>
            <person name="Borowsky M.L."/>
            <person name="Burke J."/>
            <person name="Butler J."/>
            <person name="Cook A."/>
            <person name="DeArellano K."/>
            <person name="DeCaprio D."/>
            <person name="Dorris L. III"/>
            <person name="Dors M."/>
            <person name="Eichler E.E."/>
            <person name="Engels R."/>
            <person name="Fahey J."/>
            <person name="Fleetwood P."/>
            <person name="Friedman C."/>
            <person name="Gearin G."/>
            <person name="Hall J.L."/>
            <person name="Hensley G."/>
            <person name="Johnson E."/>
            <person name="Jones C."/>
            <person name="Kamat A."/>
            <person name="Kaur A."/>
            <person name="Locke D.P."/>
            <person name="Madan A."/>
            <person name="Munson G."/>
            <person name="Jaffe D.B."/>
            <person name="Lui A."/>
            <person name="Macdonald P."/>
            <person name="Mauceli E."/>
            <person name="Naylor J.W."/>
            <person name="Nesbitt R."/>
            <person name="Nicol R."/>
            <person name="O'Leary S.B."/>
            <person name="Ratcliffe A."/>
            <person name="Rounsley S."/>
            <person name="She X."/>
            <person name="Sneddon K.M.B."/>
            <person name="Stewart S."/>
            <person name="Sougnez C."/>
            <person name="Stone S.M."/>
            <person name="Topham K."/>
            <person name="Vincent D."/>
            <person name="Wang S."/>
            <person name="Zimmer A.R."/>
            <person name="Birren B.W."/>
            <person name="Hood L."/>
            <person name="Lander E.S."/>
            <person name="Nusbaum C."/>
        </authorList>
    </citation>
    <scope>NUCLEOTIDE SEQUENCE [LARGE SCALE GENOMIC DNA]</scope>
</reference>
<reference key="3">
    <citation type="submission" date="2005-07" db="EMBL/GenBank/DDBJ databases">
        <authorList>
            <person name="Mural R.J."/>
            <person name="Istrail S."/>
            <person name="Sutton G.G."/>
            <person name="Florea L."/>
            <person name="Halpern A.L."/>
            <person name="Mobarry C.M."/>
            <person name="Lippert R."/>
            <person name="Walenz B."/>
            <person name="Shatkay H."/>
            <person name="Dew I."/>
            <person name="Miller J.R."/>
            <person name="Flanigan M.J."/>
            <person name="Edwards N.J."/>
            <person name="Bolanos R."/>
            <person name="Fasulo D."/>
            <person name="Halldorsson B.V."/>
            <person name="Hannenhalli S."/>
            <person name="Turner R."/>
            <person name="Yooseph S."/>
            <person name="Lu F."/>
            <person name="Nusskern D.R."/>
            <person name="Shue B.C."/>
            <person name="Zheng X.H."/>
            <person name="Zhong F."/>
            <person name="Delcher A.L."/>
            <person name="Huson D.H."/>
            <person name="Kravitz S.A."/>
            <person name="Mouchard L."/>
            <person name="Reinert K."/>
            <person name="Remington K.A."/>
            <person name="Clark A.G."/>
            <person name="Waterman M.S."/>
            <person name="Eichler E.E."/>
            <person name="Adams M.D."/>
            <person name="Hunkapiller M.W."/>
            <person name="Myers E.W."/>
            <person name="Venter J.C."/>
        </authorList>
    </citation>
    <scope>NUCLEOTIDE SEQUENCE [LARGE SCALE GENOMIC DNA]</scope>
    <scope>VARIANT GLU-1193</scope>
</reference>
<reference key="4">
    <citation type="journal article" date="2004" name="Genome Res.">
        <title>The status, quality, and expansion of the NIH full-length cDNA project: the Mammalian Gene Collection (MGC).</title>
        <authorList>
            <consortium name="The MGC Project Team"/>
        </authorList>
    </citation>
    <scope>NUCLEOTIDE SEQUENCE [LARGE SCALE MRNA] (ISOFORMS 1 AND 3)</scope>
    <scope>VARIANTS LYS-37 AND GLU-1193</scope>
    <source>
        <tissue>Placenta</tissue>
    </source>
</reference>
<reference key="5">
    <citation type="journal article" date="1998" name="J. Cell Sci.">
        <title>Myr 7 is a novel myosin IX-RhoGAP expressed in rat brain.</title>
        <authorList>
            <person name="Chieregatti E."/>
            <person name="Gaertner A."/>
            <person name="Stoeffler H.-E."/>
            <person name="Baehler M."/>
        </authorList>
    </citation>
    <scope>NUCLEOTIDE SEQUENCE [MRNA] OF 1-774 (ISOFORMS 1/4)</scope>
</reference>
<reference key="6">
    <citation type="submission" date="2007-01" db="EMBL/GenBank/DDBJ databases">
        <title>Multiplex amplification and cloning of 5'-ends of cDNA by ligase-free recombination: preparation of full-length cDNA clones encoding motor proteins.</title>
        <authorList>
            <person name="Yamakawa H."/>
            <person name="Kikuno R.F."/>
            <person name="Nagase T."/>
            <person name="Ohara O."/>
        </authorList>
    </citation>
    <scope>NUCLEOTIDE SEQUENCE [LARGE SCALE MRNA] OF 26-2548 (ISOFORM 1)</scope>
    <scope>VARIANT GLU-1193</scope>
    <source>
        <tissue>Brain</tissue>
    </source>
</reference>
<reference key="7">
    <citation type="journal article" date="1994" name="Proc. Natl. Acad. Sci. U.S.A.">
        <title>Identification and overlapping expression of multiple unconventional myosin genes in vertebrate cell types.</title>
        <authorList>
            <person name="Bement W.M."/>
            <person name="Hasson T."/>
            <person name="Wirth J.A."/>
            <person name="Cheney R.E."/>
            <person name="Mooseker M.S."/>
        </authorList>
    </citation>
    <scope>NUCLEOTIDE SEQUENCE [MRNA] OF 234-322 (ISOFORMS 1/2/3/4)</scope>
</reference>
<reference key="8">
    <citation type="journal article" date="2005" name="Nucleic Acids Res.">
        <title>Non-EST based prediction of exon skipping and intron retention events using Pfam information.</title>
        <authorList>
            <person name="Hiller M."/>
            <person name="Huse K."/>
            <person name="Platzer M."/>
            <person name="Backofen R."/>
        </authorList>
    </citation>
    <scope>NUCLEOTIDE SEQUENCE [MRNA] OF 292-445 (ISOFORMS 1/2/3/4/5)</scope>
</reference>
<reference key="9">
    <citation type="journal article" date="2007" name="BMC Genomics">
        <title>The full-ORF clone resource of the German cDNA consortium.</title>
        <authorList>
            <person name="Bechtel S."/>
            <person name="Rosenfelder H."/>
            <person name="Duda A."/>
            <person name="Schmidt C.P."/>
            <person name="Ernst U."/>
            <person name="Wellenreuther R."/>
            <person name="Mehrle A."/>
            <person name="Schuster C."/>
            <person name="Bahr A."/>
            <person name="Bloecker H."/>
            <person name="Heubner D."/>
            <person name="Hoerlein A."/>
            <person name="Michel G."/>
            <person name="Wedler H."/>
            <person name="Koehrer K."/>
            <person name="Ottenwaelder B."/>
            <person name="Poustka A."/>
            <person name="Wiemann S."/>
            <person name="Schupp I."/>
        </authorList>
    </citation>
    <scope>NUCLEOTIDE SEQUENCE [LARGE SCALE MRNA] OF 1223-2548 (ISOFORM 4)</scope>
    <source>
        <tissue>Testis</tissue>
    </source>
</reference>
<reference key="10">
    <citation type="journal article" date="2004" name="Nat. Genet.">
        <title>Complete sequencing and characterization of 21,243 full-length human cDNAs.</title>
        <authorList>
            <person name="Ota T."/>
            <person name="Suzuki Y."/>
            <person name="Nishikawa T."/>
            <person name="Otsuki T."/>
            <person name="Sugiyama T."/>
            <person name="Irie R."/>
            <person name="Wakamatsu A."/>
            <person name="Hayashi K."/>
            <person name="Sato H."/>
            <person name="Nagai K."/>
            <person name="Kimura K."/>
            <person name="Makita H."/>
            <person name="Sekine M."/>
            <person name="Obayashi M."/>
            <person name="Nishi T."/>
            <person name="Shibahara T."/>
            <person name="Tanaka T."/>
            <person name="Ishii S."/>
            <person name="Yamamoto J."/>
            <person name="Saito K."/>
            <person name="Kawai Y."/>
            <person name="Isono Y."/>
            <person name="Nakamura Y."/>
            <person name="Nagahari K."/>
            <person name="Murakami K."/>
            <person name="Yasuda T."/>
            <person name="Iwayanagi T."/>
            <person name="Wagatsuma M."/>
            <person name="Shiratori A."/>
            <person name="Sudo H."/>
            <person name="Hosoiri T."/>
            <person name="Kaku Y."/>
            <person name="Kodaira H."/>
            <person name="Kondo H."/>
            <person name="Sugawara M."/>
            <person name="Takahashi M."/>
            <person name="Kanda K."/>
            <person name="Yokoi T."/>
            <person name="Furuya T."/>
            <person name="Kikkawa E."/>
            <person name="Omura Y."/>
            <person name="Abe K."/>
            <person name="Kamihara K."/>
            <person name="Katsuta N."/>
            <person name="Sato K."/>
            <person name="Tanikawa M."/>
            <person name="Yamazaki M."/>
            <person name="Ninomiya K."/>
            <person name="Ishibashi T."/>
            <person name="Yamashita H."/>
            <person name="Murakawa K."/>
            <person name="Fujimori K."/>
            <person name="Tanai H."/>
            <person name="Kimata M."/>
            <person name="Watanabe M."/>
            <person name="Hiraoka S."/>
            <person name="Chiba Y."/>
            <person name="Ishida S."/>
            <person name="Ono Y."/>
            <person name="Takiguchi S."/>
            <person name="Watanabe S."/>
            <person name="Yosida M."/>
            <person name="Hotuta T."/>
            <person name="Kusano J."/>
            <person name="Kanehori K."/>
            <person name="Takahashi-Fujii A."/>
            <person name="Hara H."/>
            <person name="Tanase T.-O."/>
            <person name="Nomura Y."/>
            <person name="Togiya S."/>
            <person name="Komai F."/>
            <person name="Hara R."/>
            <person name="Takeuchi K."/>
            <person name="Arita M."/>
            <person name="Imose N."/>
            <person name="Musashino K."/>
            <person name="Yuuki H."/>
            <person name="Oshima A."/>
            <person name="Sasaki N."/>
            <person name="Aotsuka S."/>
            <person name="Yoshikawa Y."/>
            <person name="Matsunawa H."/>
            <person name="Ichihara T."/>
            <person name="Shiohata N."/>
            <person name="Sano S."/>
            <person name="Moriya S."/>
            <person name="Momiyama H."/>
            <person name="Satoh N."/>
            <person name="Takami S."/>
            <person name="Terashima Y."/>
            <person name="Suzuki O."/>
            <person name="Nakagawa S."/>
            <person name="Senoh A."/>
            <person name="Mizoguchi H."/>
            <person name="Goto Y."/>
            <person name="Shimizu F."/>
            <person name="Wakebe H."/>
            <person name="Hishigaki H."/>
            <person name="Watanabe T."/>
            <person name="Sugiyama A."/>
            <person name="Takemoto M."/>
            <person name="Kawakami B."/>
            <person name="Yamazaki M."/>
            <person name="Watanabe K."/>
            <person name="Kumagai A."/>
            <person name="Itakura S."/>
            <person name="Fukuzumi Y."/>
            <person name="Fujimori Y."/>
            <person name="Komiyama M."/>
            <person name="Tashiro H."/>
            <person name="Tanigami A."/>
            <person name="Fujiwara T."/>
            <person name="Ono T."/>
            <person name="Yamada K."/>
            <person name="Fujii Y."/>
            <person name="Ozaki K."/>
            <person name="Hirao M."/>
            <person name="Ohmori Y."/>
            <person name="Kawabata A."/>
            <person name="Hikiji T."/>
            <person name="Kobatake N."/>
            <person name="Inagaki H."/>
            <person name="Ikema Y."/>
            <person name="Okamoto S."/>
            <person name="Okitani R."/>
            <person name="Kawakami T."/>
            <person name="Noguchi S."/>
            <person name="Itoh T."/>
            <person name="Shigeta K."/>
            <person name="Senba T."/>
            <person name="Matsumura K."/>
            <person name="Nakajima Y."/>
            <person name="Mizuno T."/>
            <person name="Morinaga M."/>
            <person name="Sasaki M."/>
            <person name="Togashi T."/>
            <person name="Oyama M."/>
            <person name="Hata H."/>
            <person name="Watanabe M."/>
            <person name="Komatsu T."/>
            <person name="Mizushima-Sugano J."/>
            <person name="Satoh T."/>
            <person name="Shirai Y."/>
            <person name="Takahashi Y."/>
            <person name="Nakagawa K."/>
            <person name="Okumura K."/>
            <person name="Nagase T."/>
            <person name="Nomura N."/>
            <person name="Kikuchi H."/>
            <person name="Masuho Y."/>
            <person name="Yamashita R."/>
            <person name="Nakai K."/>
            <person name="Yada T."/>
            <person name="Nakamura Y."/>
            <person name="Ohara O."/>
            <person name="Isogai T."/>
            <person name="Sugano S."/>
        </authorList>
    </citation>
    <scope>NUCLEOTIDE SEQUENCE [LARGE SCALE MRNA] OF 1457-1981 (ISOFORM 4)</scope>
    <scope>NUCLEOTIDE SEQUENCE [LARGE SCALE MRNA] OF 1984-2548 (ISOFORMS 1/2/4/5)</scope>
    <source>
        <tissue>Ovary</tissue>
        <tissue>Placenta</tissue>
    </source>
</reference>
<reference key="11">
    <citation type="journal article" date="2008" name="Proc. Natl. Acad. Sci. U.S.A.">
        <title>A quantitative atlas of mitotic phosphorylation.</title>
        <authorList>
            <person name="Dephoure N."/>
            <person name="Zhou C."/>
            <person name="Villen J."/>
            <person name="Beausoleil S.A."/>
            <person name="Bakalarski C.E."/>
            <person name="Elledge S.J."/>
            <person name="Gygi S.P."/>
        </authorList>
    </citation>
    <scope>IDENTIFICATION BY MASS SPECTROMETRY [LARGE SCALE ANALYSIS]</scope>
    <source>
        <tissue>Cervix carcinoma</tissue>
    </source>
</reference>
<reference key="12">
    <citation type="journal article" date="2011" name="BMC Syst. Biol.">
        <title>Initial characterization of the human central proteome.</title>
        <authorList>
            <person name="Burkard T.R."/>
            <person name="Planyavsky M."/>
            <person name="Kaupe I."/>
            <person name="Breitwieser F.P."/>
            <person name="Buerckstuemmer T."/>
            <person name="Bennett K.L."/>
            <person name="Superti-Furga G."/>
            <person name="Colinge J."/>
        </authorList>
    </citation>
    <scope>IDENTIFICATION BY MASS SPECTROMETRY [LARGE SCALE ANALYSIS]</scope>
</reference>
<reference key="13">
    <citation type="journal article" date="2013" name="J. Proteome Res.">
        <title>Toward a comprehensive characterization of a human cancer cell phosphoproteome.</title>
        <authorList>
            <person name="Zhou H."/>
            <person name="Di Palma S."/>
            <person name="Preisinger C."/>
            <person name="Peng M."/>
            <person name="Polat A.N."/>
            <person name="Heck A.J."/>
            <person name="Mohammed S."/>
        </authorList>
    </citation>
    <scope>PHOSPHORYLATION [LARGE SCALE ANALYSIS] AT SER-1299; SER-1317; SER-1364; SER-2294 AND SER-2464</scope>
    <scope>IDENTIFICATION BY MASS SPECTROMETRY [LARGE SCALE ANALYSIS]</scope>
    <source>
        <tissue>Cervix carcinoma</tissue>
        <tissue>Erythroleukemia</tissue>
    </source>
</reference>
<reference key="14">
    <citation type="journal article" date="2014" name="J. Proteomics">
        <title>An enzyme assisted RP-RPLC approach for in-depth analysis of human liver phosphoproteome.</title>
        <authorList>
            <person name="Bian Y."/>
            <person name="Song C."/>
            <person name="Cheng K."/>
            <person name="Dong M."/>
            <person name="Wang F."/>
            <person name="Huang J."/>
            <person name="Sun D."/>
            <person name="Wang L."/>
            <person name="Ye M."/>
            <person name="Zou H."/>
        </authorList>
    </citation>
    <scope>IDENTIFICATION BY MASS SPECTROMETRY [LARGE SCALE ANALYSIS]</scope>
    <source>
        <tissue>Liver</tissue>
    </source>
</reference>
<reference key="15">
    <citation type="journal article" date="2016" name="Sci. Rep.">
        <title>ALPK1 phosphorylates myosin IIA modulating TNF-alpha trafficking in gout flares.</title>
        <authorList>
            <person name="Lee C.P."/>
            <person name="Chiang S.L."/>
            <person name="Ko A.M."/>
            <person name="Liu Y.F."/>
            <person name="Ma C."/>
            <person name="Lu C.Y."/>
            <person name="Huang C.M."/>
            <person name="Chang J.G."/>
            <person name="Kuo T.M."/>
            <person name="Chen C.L."/>
            <person name="Tsai E.M."/>
            <person name="Ko Y.C."/>
        </authorList>
    </citation>
    <scope>PHOSPHORYLATION</scope>
</reference>
<reference key="16">
    <citation type="journal article" date="2016" name="Brain">
        <title>Identification of mutations in the MYO9A gene in patients with congenital myasthenic syndrome.</title>
        <authorList>
            <person name="O'Connor E."/>
            <person name="Toepf A."/>
            <person name="Mueller J.S."/>
            <person name="Cox D."/>
            <person name="Evangelista T."/>
            <person name="Colomer J."/>
            <person name="Abicht A."/>
            <person name="Senderek J."/>
            <person name="Hasselmann O."/>
            <person name="Yaramis A."/>
            <person name="Laval S.H."/>
            <person name="Lochmueller H."/>
        </authorList>
    </citation>
    <scope>INVOLVEMENT IN CMS24</scope>
    <scope>VARIANTS CMS24 HIS-1517; GLY-1698 AND HIS-2283</scope>
</reference>
<reference key="17">
    <citation type="journal article" date="2016" name="J. Clin. Invest.">
        <title>Molecular etiology of arthrogryposis in multiple families of mostly Turkish origin.</title>
        <authorList>
            <person name="Bayram Y."/>
            <person name="Karaca E."/>
            <person name="Coban Akdemir Z."/>
            <person name="Yilmaz E.O."/>
            <person name="Tayfun G.A."/>
            <person name="Aydin H."/>
            <person name="Torun D."/>
            <person name="Bozdogan S.T."/>
            <person name="Gezdirici A."/>
            <person name="Isikay S."/>
            <person name="Atik M.M."/>
            <person name="Gambin T."/>
            <person name="Harel T."/>
            <person name="El-Hattab A.W."/>
            <person name="Charng W.L."/>
            <person name="Pehlivan D."/>
            <person name="Jhangiani S.N."/>
            <person name="Muzny D.M."/>
            <person name="Karaman A."/>
            <person name="Celik T."/>
            <person name="Yuregir O.O."/>
            <person name="Yildirim T."/>
            <person name="Bayhan I.A."/>
            <person name="Boerwinkle E."/>
            <person name="Gibbs R.A."/>
            <person name="Elcioglu N."/>
            <person name="Tuysuz B."/>
            <person name="Lupski J.R."/>
        </authorList>
    </citation>
    <scope>INVOLVEMENT IN CMS24</scope>
    <scope>VARIANTS CMS24 CYS-203 AND GLU-2282</scope>
</reference>
<reference key="18">
    <citation type="journal article" date="2019" name="Genet. Med.">
        <title>Autozygome and high throughput confirmation of disease genes candidacy.</title>
        <authorList>
            <person name="Maddirevula S."/>
            <person name="Alzahrani F."/>
            <person name="Al-Owain M."/>
            <person name="Al Muhaizea M.A."/>
            <person name="Kayyali H.R."/>
            <person name="AlHashem A."/>
            <person name="Rahbeeni Z."/>
            <person name="Al-Otaibi M."/>
            <person name="Alzaidan H.I."/>
            <person name="Balobaid A."/>
            <person name="El Khashab H.Y."/>
            <person name="Bubshait D.K."/>
            <person name="Faden M."/>
            <person name="Yamani S.A."/>
            <person name="Dabbagh O."/>
            <person name="Al-Mureikhi M."/>
            <person name="Jasser A.A."/>
            <person name="Alsaif H.S."/>
            <person name="Alluhaydan I."/>
            <person name="Seidahmed M.Z."/>
            <person name="Alabbasi B.H."/>
            <person name="Almogarri I."/>
            <person name="Kurdi W."/>
            <person name="Akleh H."/>
            <person name="Qari A."/>
            <person name="Al Tala S.M."/>
            <person name="Alhomaidi S."/>
            <person name="Kentab A.Y."/>
            <person name="Salih M.A."/>
            <person name="Chedrawi A."/>
            <person name="Alameer S."/>
            <person name="Tabarki B."/>
            <person name="Shamseldin H.E."/>
            <person name="Patel N."/>
            <person name="Ibrahim N."/>
            <person name="Abdulwahab F."/>
            <person name="Samira M."/>
            <person name="Goljan E."/>
            <person name="Abouelhoda M."/>
            <person name="Meyer B.F."/>
            <person name="Hashem M."/>
            <person name="Shaheen R."/>
            <person name="AlShahwan S."/>
            <person name="Alfadhel M."/>
            <person name="Ben-Omran T."/>
            <person name="Al-Qattan M.M."/>
            <person name="Monies D."/>
            <person name="Alkuraya F.S."/>
        </authorList>
    </citation>
    <scope>VARIANT CMS24 513-ARG--VAL-2548 DEL</scope>
</reference>
<accession>B2RTY4</accession>
<accession>B0I1T5</accession>
<accession>C9IYB3</accession>
<accession>C9JA86</accession>
<accession>Q14787</accession>
<accession>Q3YLD7</accession>
<accession>Q3YLD8</accession>
<accession>Q6P986</accession>
<accession>Q9H8T5</accession>
<accession>Q9NTG2</accession>
<accession>Q9NUY2</accession>
<accession>Q9UEP3</accession>
<accession>Q9UNJ2</accession>
<proteinExistence type="evidence at protein level"/>
<gene>
    <name type="primary">MYO9A</name>
    <name type="synonym">MYR7</name>
</gene>